<name>TRMB_AQUAE</name>
<accession>O66479</accession>
<keyword id="KW-0903">Direct protein sequencing</keyword>
<keyword id="KW-0489">Methyltransferase</keyword>
<keyword id="KW-1185">Reference proteome</keyword>
<keyword id="KW-0949">S-adenosyl-L-methionine</keyword>
<keyword id="KW-0808">Transferase</keyword>
<keyword id="KW-0819">tRNA processing</keyword>
<organism>
    <name type="scientific">Aquifex aeolicus (strain VF5)</name>
    <dbReference type="NCBI Taxonomy" id="224324"/>
    <lineage>
        <taxon>Bacteria</taxon>
        <taxon>Pseudomonadati</taxon>
        <taxon>Aquificota</taxon>
        <taxon>Aquificia</taxon>
        <taxon>Aquificales</taxon>
        <taxon>Aquificaceae</taxon>
        <taxon>Aquifex</taxon>
    </lineage>
</organism>
<protein>
    <recommendedName>
        <fullName evidence="2">tRNA (guanine-N(7)-)-methyltransferase</fullName>
        <ecNumber evidence="2">2.1.1.33</ecNumber>
    </recommendedName>
    <alternativeName>
        <fullName evidence="2">tRNA (guanine(46)-N(7))-methyltransferase</fullName>
    </alternativeName>
    <alternativeName>
        <fullName evidence="2">tRNA(m7G46)-methyltransferase</fullName>
    </alternativeName>
</protein>
<sequence length="297" mass="35639">MLCYVNYKRVKRPVEIPNLEVEIGFGRGDFIVKLAKENPDKNFFGIEISQISIEKLMKRVGKKGLKNVYCTNVDAYWGFYFLFRDNYVENIYMNYPDPWFKKRHHKRRLTKPERLYMFAKKLKLGGEIRIRTDNYEFLEFTKESAKVLDCFEVEEGTLNVKEPLTKYEQKWLSMGKTLYKLILRKVKEPKFVEHPEVEEVRELFPVKVKVESVDPKKIESREIKLDEEVYFKTFKVWQRDKDFLVECLLSEKGYLQKFFIQIKRKEDGYVIDVSPYSEVLRTRNLQRSIQTVAQLLS</sequence>
<comment type="function">
    <text evidence="2">Catalyzes the formation of N(7)-methylguanine at position 46 (m7G46) in tRNA.</text>
</comment>
<comment type="catalytic activity">
    <reaction evidence="2">
        <text>guanosine(46) in tRNA + S-adenosyl-L-methionine = N(7)-methylguanosine(46) in tRNA + S-adenosyl-L-homocysteine</text>
        <dbReference type="Rhea" id="RHEA:42708"/>
        <dbReference type="Rhea" id="RHEA-COMP:10188"/>
        <dbReference type="Rhea" id="RHEA-COMP:10189"/>
        <dbReference type="ChEBI" id="CHEBI:57856"/>
        <dbReference type="ChEBI" id="CHEBI:59789"/>
        <dbReference type="ChEBI" id="CHEBI:74269"/>
        <dbReference type="ChEBI" id="CHEBI:74480"/>
        <dbReference type="EC" id="2.1.1.33"/>
    </reaction>
</comment>
<comment type="pathway">
    <text evidence="2">tRNA modification; N(7)-methylguanine-tRNA biosynthesis.</text>
</comment>
<comment type="domain">
    <text>The C-terminal region is probably involved in protein stability.</text>
</comment>
<comment type="similarity">
    <text evidence="2">Belongs to the class I-like SAM-binding methyltransferase superfamily. TrmB family.</text>
</comment>
<evidence type="ECO:0000250" key="1"/>
<evidence type="ECO:0000255" key="2">
    <source>
        <dbReference type="HAMAP-Rule" id="MF_01057"/>
    </source>
</evidence>
<gene>
    <name evidence="2" type="primary">trmB</name>
    <name type="ordered locus">aq_065</name>
</gene>
<dbReference type="EC" id="2.1.1.33" evidence="2"/>
<dbReference type="EMBL" id="AE000657">
    <property type="protein sequence ID" value="AAC06452.1"/>
    <property type="molecule type" value="Genomic_DNA"/>
</dbReference>
<dbReference type="PIR" id="D70306">
    <property type="entry name" value="D70306"/>
</dbReference>
<dbReference type="RefSeq" id="NP_213039.1">
    <property type="nucleotide sequence ID" value="NC_000918.1"/>
</dbReference>
<dbReference type="RefSeq" id="WP_010879977.1">
    <property type="nucleotide sequence ID" value="NC_000918.1"/>
</dbReference>
<dbReference type="SMR" id="O66479"/>
<dbReference type="FunCoup" id="O66479">
    <property type="interactions" value="280"/>
</dbReference>
<dbReference type="STRING" id="224324.aq_065"/>
<dbReference type="EnsemblBacteria" id="AAC06452">
    <property type="protein sequence ID" value="AAC06452"/>
    <property type="gene ID" value="aq_065"/>
</dbReference>
<dbReference type="KEGG" id="aae:aq_065"/>
<dbReference type="PATRIC" id="fig|224324.8.peg.56"/>
<dbReference type="eggNOG" id="COG0220">
    <property type="taxonomic scope" value="Bacteria"/>
</dbReference>
<dbReference type="HOGENOM" id="CLU_077150_0_0_0"/>
<dbReference type="InParanoid" id="O66479"/>
<dbReference type="OrthoDB" id="9802090at2"/>
<dbReference type="BRENDA" id="2.1.1.33">
    <property type="organism ID" value="396"/>
</dbReference>
<dbReference type="UniPathway" id="UPA00989"/>
<dbReference type="Proteomes" id="UP000000798">
    <property type="component" value="Chromosome"/>
</dbReference>
<dbReference type="GO" id="GO:0043527">
    <property type="term" value="C:tRNA methyltransferase complex"/>
    <property type="evidence" value="ECO:0000318"/>
    <property type="project" value="GO_Central"/>
</dbReference>
<dbReference type="GO" id="GO:0008176">
    <property type="term" value="F:tRNA (guanine(46)-N7)-methyltransferase activity"/>
    <property type="evidence" value="ECO:0000318"/>
    <property type="project" value="GO_Central"/>
</dbReference>
<dbReference type="GO" id="GO:0036265">
    <property type="term" value="P:RNA (guanine-N7)-methylation"/>
    <property type="evidence" value="ECO:0000318"/>
    <property type="project" value="GO_Central"/>
</dbReference>
<dbReference type="GO" id="GO:0030488">
    <property type="term" value="P:tRNA methylation"/>
    <property type="evidence" value="ECO:0000318"/>
    <property type="project" value="GO_Central"/>
</dbReference>
<dbReference type="FunFam" id="3.40.50.150:FF:000674">
    <property type="entry name" value="tRNA (guanine-N(7)-)-methyltransferase"/>
    <property type="match status" value="1"/>
</dbReference>
<dbReference type="Gene3D" id="3.40.50.150">
    <property type="entry name" value="Vaccinia Virus protein VP39"/>
    <property type="match status" value="1"/>
</dbReference>
<dbReference type="HAMAP" id="MF_01057">
    <property type="entry name" value="tRNA_methyltr_TrmB"/>
    <property type="match status" value="1"/>
</dbReference>
<dbReference type="InterPro" id="IPR029063">
    <property type="entry name" value="SAM-dependent_MTases_sf"/>
</dbReference>
<dbReference type="InterPro" id="IPR003358">
    <property type="entry name" value="tRNA_(Gua-N-7)_MeTrfase_Trmb"/>
</dbReference>
<dbReference type="InterPro" id="IPR055361">
    <property type="entry name" value="tRNA_methyltr_TrmB_bact"/>
</dbReference>
<dbReference type="NCBIfam" id="TIGR00091">
    <property type="entry name" value="tRNA (guanosine(46)-N7)-methyltransferase TrmB"/>
    <property type="match status" value="1"/>
</dbReference>
<dbReference type="PANTHER" id="PTHR23417">
    <property type="entry name" value="3-DEOXY-D-MANNO-OCTULOSONIC-ACID TRANSFERASE/TRNA GUANINE-N 7 - -METHYLTRANSFERASE"/>
    <property type="match status" value="1"/>
</dbReference>
<dbReference type="PANTHER" id="PTHR23417:SF14">
    <property type="entry name" value="PENTACOTRIPEPTIDE-REPEAT REGION OF PRORP DOMAIN-CONTAINING PROTEIN"/>
    <property type="match status" value="1"/>
</dbReference>
<dbReference type="Pfam" id="PF02390">
    <property type="entry name" value="Methyltransf_4"/>
    <property type="match status" value="1"/>
</dbReference>
<dbReference type="SUPFAM" id="SSF53335">
    <property type="entry name" value="S-adenosyl-L-methionine-dependent methyltransferases"/>
    <property type="match status" value="1"/>
</dbReference>
<dbReference type="PROSITE" id="PS51625">
    <property type="entry name" value="SAM_MT_TRMB"/>
    <property type="match status" value="1"/>
</dbReference>
<proteinExistence type="evidence at protein level"/>
<reference key="1">
    <citation type="journal article" date="1998" name="Nature">
        <title>The complete genome of the hyperthermophilic bacterium Aquifex aeolicus.</title>
        <authorList>
            <person name="Deckert G."/>
            <person name="Warren P.V."/>
            <person name="Gaasterland T."/>
            <person name="Young W.G."/>
            <person name="Lenox A.L."/>
            <person name="Graham D.E."/>
            <person name="Overbeek R."/>
            <person name="Snead M.A."/>
            <person name="Keller M."/>
            <person name="Aujay M."/>
            <person name="Huber R."/>
            <person name="Feldman R.A."/>
            <person name="Short J.M."/>
            <person name="Olsen G.J."/>
            <person name="Swanson R.V."/>
        </authorList>
    </citation>
    <scope>NUCLEOTIDE SEQUENCE [LARGE SCALE GENOMIC DNA]</scope>
    <source>
        <strain>VF5</strain>
    </source>
</reference>
<reference key="2">
    <citation type="journal article" date="2006" name="Nucleic Acids Symp. Ser.">
        <title>The core domain of Aquifex aeolicus tRNA (m7G46) methyltransferase has the methyl-transfer activity to tRNA.</title>
        <authorList>
            <person name="Tomikawa C."/>
            <person name="Hori H."/>
        </authorList>
    </citation>
    <scope>PROTEIN SEQUENCE OF 204-214</scope>
    <scope>ROLE OF C-TERMINAL REGION</scope>
</reference>
<feature type="chain" id="PRO_0000171286" description="tRNA (guanine-N(7)-)-methyltransferase">
    <location>
        <begin position="1"/>
        <end position="297"/>
    </location>
</feature>
<feature type="active site" evidence="1">
    <location>
        <position position="97"/>
    </location>
</feature>
<feature type="binding site" evidence="2">
    <location>
        <position position="22"/>
    </location>
    <ligand>
        <name>S-adenosyl-L-methionine</name>
        <dbReference type="ChEBI" id="CHEBI:59789"/>
    </ligand>
</feature>
<feature type="binding site" evidence="2">
    <location>
        <position position="47"/>
    </location>
    <ligand>
        <name>S-adenosyl-L-methionine</name>
        <dbReference type="ChEBI" id="CHEBI:59789"/>
    </ligand>
</feature>
<feature type="binding site" evidence="2">
    <location>
        <position position="74"/>
    </location>
    <ligand>
        <name>S-adenosyl-L-methionine</name>
        <dbReference type="ChEBI" id="CHEBI:59789"/>
    </ligand>
</feature>
<feature type="binding site" evidence="2">
    <location>
        <position position="97"/>
    </location>
    <ligand>
        <name>S-adenosyl-L-methionine</name>
        <dbReference type="ChEBI" id="CHEBI:59789"/>
    </ligand>
</feature>
<feature type="binding site" evidence="2">
    <location>
        <position position="101"/>
    </location>
    <ligand>
        <name>substrate</name>
    </ligand>
</feature>
<feature type="binding site" evidence="2">
    <location>
        <position position="133"/>
    </location>
    <ligand>
        <name>substrate</name>
    </ligand>
</feature>
<feature type="binding site" evidence="2">
    <location>
        <begin position="165"/>
        <end position="168"/>
    </location>
    <ligand>
        <name>substrate</name>
    </ligand>
</feature>